<gene>
    <name evidence="1" type="primary">infA</name>
</gene>
<organism>
    <name type="scientific">Cercidiphyllum japonicum</name>
    <name type="common">Katsura tree</name>
    <dbReference type="NCBI Taxonomy" id="13413"/>
    <lineage>
        <taxon>Eukaryota</taxon>
        <taxon>Viridiplantae</taxon>
        <taxon>Streptophyta</taxon>
        <taxon>Embryophyta</taxon>
        <taxon>Tracheophyta</taxon>
        <taxon>Spermatophyta</taxon>
        <taxon>Magnoliopsida</taxon>
        <taxon>eudicotyledons</taxon>
        <taxon>Gunneridae</taxon>
        <taxon>Pentapetalae</taxon>
        <taxon>Saxifragales</taxon>
        <taxon>Cercidiphyllaceae</taxon>
        <taxon>Cercidiphyllum</taxon>
    </lineage>
</organism>
<protein>
    <recommendedName>
        <fullName evidence="1">Translation initiation factor IF-1, chloroplastic</fullName>
    </recommendedName>
</protein>
<dbReference type="EMBL" id="AF347623">
    <property type="protein sequence ID" value="AAK38850.1"/>
    <property type="molecule type" value="Genomic_DNA"/>
</dbReference>
<dbReference type="RefSeq" id="YP_009493306.1">
    <property type="nucleotide sequence ID" value="NC_037940.1"/>
</dbReference>
<dbReference type="SMR" id="Q95GN3"/>
<dbReference type="GeneID" id="36953575"/>
<dbReference type="GO" id="GO:0009507">
    <property type="term" value="C:chloroplast"/>
    <property type="evidence" value="ECO:0007669"/>
    <property type="project" value="UniProtKB-SubCell"/>
</dbReference>
<dbReference type="GO" id="GO:0005829">
    <property type="term" value="C:cytosol"/>
    <property type="evidence" value="ECO:0007669"/>
    <property type="project" value="TreeGrafter"/>
</dbReference>
<dbReference type="GO" id="GO:0043022">
    <property type="term" value="F:ribosome binding"/>
    <property type="evidence" value="ECO:0007669"/>
    <property type="project" value="UniProtKB-UniRule"/>
</dbReference>
<dbReference type="GO" id="GO:0019843">
    <property type="term" value="F:rRNA binding"/>
    <property type="evidence" value="ECO:0007669"/>
    <property type="project" value="UniProtKB-UniRule"/>
</dbReference>
<dbReference type="GO" id="GO:0003743">
    <property type="term" value="F:translation initiation factor activity"/>
    <property type="evidence" value="ECO:0007669"/>
    <property type="project" value="UniProtKB-UniRule"/>
</dbReference>
<dbReference type="CDD" id="cd04451">
    <property type="entry name" value="S1_IF1"/>
    <property type="match status" value="1"/>
</dbReference>
<dbReference type="FunFam" id="2.40.50.140:FF:000019">
    <property type="entry name" value="Translation initiation factor IF-1, chloroplastic"/>
    <property type="match status" value="1"/>
</dbReference>
<dbReference type="Gene3D" id="2.40.50.140">
    <property type="entry name" value="Nucleic acid-binding proteins"/>
    <property type="match status" value="1"/>
</dbReference>
<dbReference type="HAMAP" id="MF_00075">
    <property type="entry name" value="IF_1"/>
    <property type="match status" value="1"/>
</dbReference>
<dbReference type="InterPro" id="IPR012340">
    <property type="entry name" value="NA-bd_OB-fold"/>
</dbReference>
<dbReference type="InterPro" id="IPR006196">
    <property type="entry name" value="RNA-binding_domain_S1_IF1"/>
</dbReference>
<dbReference type="InterPro" id="IPR003029">
    <property type="entry name" value="S1_domain"/>
</dbReference>
<dbReference type="InterPro" id="IPR004368">
    <property type="entry name" value="TIF_IF1"/>
</dbReference>
<dbReference type="NCBIfam" id="TIGR00008">
    <property type="entry name" value="infA"/>
    <property type="match status" value="1"/>
</dbReference>
<dbReference type="PANTHER" id="PTHR33370">
    <property type="entry name" value="TRANSLATION INITIATION FACTOR IF-1, CHLOROPLASTIC"/>
    <property type="match status" value="1"/>
</dbReference>
<dbReference type="PANTHER" id="PTHR33370:SF1">
    <property type="entry name" value="TRANSLATION INITIATION FACTOR IF-1, CHLOROPLASTIC"/>
    <property type="match status" value="1"/>
</dbReference>
<dbReference type="Pfam" id="PF01176">
    <property type="entry name" value="eIF-1a"/>
    <property type="match status" value="1"/>
</dbReference>
<dbReference type="SMART" id="SM00316">
    <property type="entry name" value="S1"/>
    <property type="match status" value="1"/>
</dbReference>
<dbReference type="SUPFAM" id="SSF50249">
    <property type="entry name" value="Nucleic acid-binding proteins"/>
    <property type="match status" value="1"/>
</dbReference>
<dbReference type="PROSITE" id="PS50832">
    <property type="entry name" value="S1_IF1_TYPE"/>
    <property type="match status" value="1"/>
</dbReference>
<accession>Q95GN3</accession>
<geneLocation type="chloroplast"/>
<evidence type="ECO:0000255" key="1">
    <source>
        <dbReference type="HAMAP-Rule" id="MF_00075"/>
    </source>
</evidence>
<sequence length="77" mass="9164">MKEQKWVHEGLITESLPNGMFRVRLDNEDLILGYISGRIRRSFIRILPGDRVKIEVSRYDSTRGRIIYRLRNKDSND</sequence>
<keyword id="KW-0150">Chloroplast</keyword>
<keyword id="KW-0396">Initiation factor</keyword>
<keyword id="KW-0934">Plastid</keyword>
<keyword id="KW-0648">Protein biosynthesis</keyword>
<keyword id="KW-0694">RNA-binding</keyword>
<keyword id="KW-0699">rRNA-binding</keyword>
<feature type="chain" id="PRO_0000095924" description="Translation initiation factor IF-1, chloroplastic">
    <location>
        <begin position="1"/>
        <end position="77"/>
    </location>
</feature>
<feature type="domain" description="S1-like" evidence="1">
    <location>
        <begin position="1"/>
        <end position="71"/>
    </location>
</feature>
<reference key="1">
    <citation type="journal article" date="2001" name="Plant Cell">
        <title>Many parallel losses of infA from chloroplast DNA during angiosperm evolution with multiple independent transfers to the nucleus.</title>
        <authorList>
            <person name="Millen R.S."/>
            <person name="Olmstead R.G."/>
            <person name="Adams K.L."/>
            <person name="Palmer J.D."/>
            <person name="Lao N.T."/>
            <person name="Heggie L."/>
            <person name="Kavanagh T.A."/>
            <person name="Hibberd J.M."/>
            <person name="Gray J.C."/>
            <person name="Morden C.W."/>
            <person name="Calie P.J."/>
            <person name="Jermiin L.S."/>
            <person name="Wolfe K.H."/>
        </authorList>
    </citation>
    <scope>NUCLEOTIDE SEQUENCE [GENOMIC DNA]</scope>
</reference>
<name>IF1C_CERJA</name>
<proteinExistence type="inferred from homology"/>
<comment type="function">
    <text evidence="1">One of the essential components for the initiation of protein synthesis. Stabilizes the binding of IF-2 and IF-3 on the 30S subunit to which N-formylmethionyl-tRNA(fMet) subsequently binds. Helps modulate mRNA selection, yielding the 30S pre-initiation complex (PIC). Upon addition of the 50S ribosomal subunit IF-1, IF-2 and IF-3 are released leaving the mature 70S translation initiation complex.</text>
</comment>
<comment type="subunit">
    <text evidence="1">Component of the 30S ribosomal translation pre-initiation complex which assembles on the 30S ribosome in the order IF-2 and IF-3, IF-1 and N-formylmethionyl-tRNA(fMet); mRNA recruitment can occur at any time during PIC assembly.</text>
</comment>
<comment type="subcellular location">
    <subcellularLocation>
        <location evidence="1">Plastid</location>
        <location evidence="1">Chloroplast</location>
    </subcellularLocation>
</comment>
<comment type="similarity">
    <text evidence="1">Belongs to the IF-1 family.</text>
</comment>